<name>HEM1_LISMH</name>
<reference key="1">
    <citation type="journal article" date="2011" name="J. Bacteriol.">
        <title>Genome sequence of lineage III Listeria monocytogenes strain HCC23.</title>
        <authorList>
            <person name="Steele C.L."/>
            <person name="Donaldson J.R."/>
            <person name="Paul D."/>
            <person name="Banes M.M."/>
            <person name="Arick T."/>
            <person name="Bridges S.M."/>
            <person name="Lawrence M.L."/>
        </authorList>
    </citation>
    <scope>NUCLEOTIDE SEQUENCE [LARGE SCALE GENOMIC DNA]</scope>
    <source>
        <strain>HCC23</strain>
    </source>
</reference>
<dbReference type="EC" id="1.2.1.70" evidence="1"/>
<dbReference type="EMBL" id="CP001175">
    <property type="protein sequence ID" value="ACK39360.1"/>
    <property type="molecule type" value="Genomic_DNA"/>
</dbReference>
<dbReference type="RefSeq" id="WP_012581266.1">
    <property type="nucleotide sequence ID" value="NC_011660.1"/>
</dbReference>
<dbReference type="SMR" id="B8DHJ1"/>
<dbReference type="KEGG" id="lmh:LMHCC_1012"/>
<dbReference type="HOGENOM" id="CLU_035113_2_2_9"/>
<dbReference type="UniPathway" id="UPA00251">
    <property type="reaction ID" value="UER00316"/>
</dbReference>
<dbReference type="GO" id="GO:0008883">
    <property type="term" value="F:glutamyl-tRNA reductase activity"/>
    <property type="evidence" value="ECO:0007669"/>
    <property type="project" value="UniProtKB-UniRule"/>
</dbReference>
<dbReference type="GO" id="GO:0050661">
    <property type="term" value="F:NADP binding"/>
    <property type="evidence" value="ECO:0007669"/>
    <property type="project" value="InterPro"/>
</dbReference>
<dbReference type="GO" id="GO:0006782">
    <property type="term" value="P:protoporphyrinogen IX biosynthetic process"/>
    <property type="evidence" value="ECO:0007669"/>
    <property type="project" value="UniProtKB-UniRule"/>
</dbReference>
<dbReference type="CDD" id="cd05213">
    <property type="entry name" value="NAD_bind_Glutamyl_tRNA_reduct"/>
    <property type="match status" value="1"/>
</dbReference>
<dbReference type="FunFam" id="3.30.460.30:FF:000001">
    <property type="entry name" value="Glutamyl-tRNA reductase"/>
    <property type="match status" value="1"/>
</dbReference>
<dbReference type="FunFam" id="3.40.50.720:FF:000031">
    <property type="entry name" value="Glutamyl-tRNA reductase"/>
    <property type="match status" value="1"/>
</dbReference>
<dbReference type="Gene3D" id="3.30.460.30">
    <property type="entry name" value="Glutamyl-tRNA reductase, N-terminal domain"/>
    <property type="match status" value="1"/>
</dbReference>
<dbReference type="Gene3D" id="3.40.50.720">
    <property type="entry name" value="NAD(P)-binding Rossmann-like Domain"/>
    <property type="match status" value="1"/>
</dbReference>
<dbReference type="HAMAP" id="MF_00087">
    <property type="entry name" value="Glu_tRNA_reductase"/>
    <property type="match status" value="1"/>
</dbReference>
<dbReference type="InterPro" id="IPR000343">
    <property type="entry name" value="4pyrrol_synth_GluRdtase"/>
</dbReference>
<dbReference type="InterPro" id="IPR015896">
    <property type="entry name" value="4pyrrol_synth_GluRdtase_dimer"/>
</dbReference>
<dbReference type="InterPro" id="IPR015895">
    <property type="entry name" value="4pyrrol_synth_GluRdtase_N"/>
</dbReference>
<dbReference type="InterPro" id="IPR018214">
    <property type="entry name" value="GluRdtase_CS"/>
</dbReference>
<dbReference type="InterPro" id="IPR036453">
    <property type="entry name" value="GluRdtase_dimer_dom_sf"/>
</dbReference>
<dbReference type="InterPro" id="IPR036343">
    <property type="entry name" value="GluRdtase_N_sf"/>
</dbReference>
<dbReference type="InterPro" id="IPR036291">
    <property type="entry name" value="NAD(P)-bd_dom_sf"/>
</dbReference>
<dbReference type="InterPro" id="IPR006151">
    <property type="entry name" value="Shikm_DH/Glu-tRNA_Rdtase"/>
</dbReference>
<dbReference type="NCBIfam" id="TIGR01035">
    <property type="entry name" value="hemA"/>
    <property type="match status" value="1"/>
</dbReference>
<dbReference type="PANTHER" id="PTHR43120">
    <property type="entry name" value="GLUTAMYL-TRNA REDUCTASE 1, CHLOROPLASTIC"/>
    <property type="match status" value="1"/>
</dbReference>
<dbReference type="PANTHER" id="PTHR43120:SF1">
    <property type="entry name" value="GLUTAMYL-TRNA REDUCTASE 1, CHLOROPLASTIC"/>
    <property type="match status" value="1"/>
</dbReference>
<dbReference type="Pfam" id="PF00745">
    <property type="entry name" value="GlutR_dimer"/>
    <property type="match status" value="1"/>
</dbReference>
<dbReference type="Pfam" id="PF05201">
    <property type="entry name" value="GlutR_N"/>
    <property type="match status" value="1"/>
</dbReference>
<dbReference type="Pfam" id="PF01488">
    <property type="entry name" value="Shikimate_DH"/>
    <property type="match status" value="1"/>
</dbReference>
<dbReference type="PIRSF" id="PIRSF000445">
    <property type="entry name" value="4pyrrol_synth_GluRdtase"/>
    <property type="match status" value="1"/>
</dbReference>
<dbReference type="SUPFAM" id="SSF69742">
    <property type="entry name" value="Glutamyl tRNA-reductase catalytic, N-terminal domain"/>
    <property type="match status" value="1"/>
</dbReference>
<dbReference type="SUPFAM" id="SSF69075">
    <property type="entry name" value="Glutamyl tRNA-reductase dimerization domain"/>
    <property type="match status" value="1"/>
</dbReference>
<dbReference type="SUPFAM" id="SSF51735">
    <property type="entry name" value="NAD(P)-binding Rossmann-fold domains"/>
    <property type="match status" value="1"/>
</dbReference>
<dbReference type="PROSITE" id="PS00747">
    <property type="entry name" value="GLUTR"/>
    <property type="match status" value="1"/>
</dbReference>
<proteinExistence type="inferred from homology"/>
<sequence length="435" mass="49252">MFILTMGLNHHTAPIDIREKLVFKETEEEMALVTLQQEKSILENVIISTCNRTEIVAVVDQIHTGRYYLKRFMANWFQMDMEKIEPYLFFHEESEAVNHLYKVTAGLDSLVLGETQILGQVKHAFEIAKQTATTGTLLNKLFREVVTFAKKVHHHTKINENAVSVSYAAVEVAKKLYGSLDNKKIVLIGAGEMSELALQNLAGSGMTDITIINRTKTNAELLANQFQAKVGAYENMNEHLLLADIVLVSTSAAEPIIKQAAMQELMEQKASSMLVIDIGLPRNVEHDCSYIPNFHLYDIDDLAGVVTANSIERQQIVLELEDTIESEVRNFFEWEKQLGVVPVIRALREKALDMQEVTMTSLENKLPGLTEREYIQIGKHMKSIINQMLKQPISELKEMSVEEDATTSIEHFKRIFGLTKTDVTIIEKEQAETRS</sequence>
<comment type="function">
    <text evidence="1">Catalyzes the NADPH-dependent reduction of glutamyl-tRNA(Glu) to glutamate 1-semialdehyde (GSA).</text>
</comment>
<comment type="catalytic activity">
    <reaction evidence="1">
        <text>(S)-4-amino-5-oxopentanoate + tRNA(Glu) + NADP(+) = L-glutamyl-tRNA(Glu) + NADPH + H(+)</text>
        <dbReference type="Rhea" id="RHEA:12344"/>
        <dbReference type="Rhea" id="RHEA-COMP:9663"/>
        <dbReference type="Rhea" id="RHEA-COMP:9680"/>
        <dbReference type="ChEBI" id="CHEBI:15378"/>
        <dbReference type="ChEBI" id="CHEBI:57501"/>
        <dbReference type="ChEBI" id="CHEBI:57783"/>
        <dbReference type="ChEBI" id="CHEBI:58349"/>
        <dbReference type="ChEBI" id="CHEBI:78442"/>
        <dbReference type="ChEBI" id="CHEBI:78520"/>
        <dbReference type="EC" id="1.2.1.70"/>
    </reaction>
</comment>
<comment type="pathway">
    <text evidence="1">Porphyrin-containing compound metabolism; protoporphyrin-IX biosynthesis; 5-aminolevulinate from L-glutamyl-tRNA(Glu): step 1/2.</text>
</comment>
<comment type="subunit">
    <text evidence="1">Homodimer.</text>
</comment>
<comment type="domain">
    <text evidence="1">Possesses an unusual extended V-shaped dimeric structure with each monomer consisting of three distinct domains arranged along a curved 'spinal' alpha-helix. The N-terminal catalytic domain specifically recognizes the glutamate moiety of the substrate. The second domain is the NADPH-binding domain, and the third C-terminal domain is responsible for dimerization.</text>
</comment>
<comment type="miscellaneous">
    <text evidence="1">During catalysis, the active site Cys acts as a nucleophile attacking the alpha-carbonyl group of tRNA-bound glutamate with the formation of a thioester intermediate between enzyme and glutamate, and the concomitant release of tRNA(Glu). The thioester intermediate is finally reduced by direct hydride transfer from NADPH, to form the product GSA.</text>
</comment>
<comment type="similarity">
    <text evidence="1">Belongs to the glutamyl-tRNA reductase family.</text>
</comment>
<gene>
    <name evidence="1" type="primary">hemA</name>
    <name type="ordered locus">LMHCC_1012</name>
</gene>
<accession>B8DHJ1</accession>
<feature type="chain" id="PRO_1000190533" description="Glutamyl-tRNA reductase">
    <location>
        <begin position="1"/>
        <end position="435"/>
    </location>
</feature>
<feature type="active site" description="Nucleophile" evidence="1">
    <location>
        <position position="50"/>
    </location>
</feature>
<feature type="binding site" evidence="1">
    <location>
        <begin position="49"/>
        <end position="52"/>
    </location>
    <ligand>
        <name>substrate</name>
    </ligand>
</feature>
<feature type="binding site" evidence="1">
    <location>
        <position position="109"/>
    </location>
    <ligand>
        <name>substrate</name>
    </ligand>
</feature>
<feature type="binding site" evidence="1">
    <location>
        <begin position="114"/>
        <end position="116"/>
    </location>
    <ligand>
        <name>substrate</name>
    </ligand>
</feature>
<feature type="binding site" evidence="1">
    <location>
        <position position="120"/>
    </location>
    <ligand>
        <name>substrate</name>
    </ligand>
</feature>
<feature type="binding site" evidence="1">
    <location>
        <begin position="189"/>
        <end position="194"/>
    </location>
    <ligand>
        <name>NADP(+)</name>
        <dbReference type="ChEBI" id="CHEBI:58349"/>
    </ligand>
</feature>
<feature type="site" description="Important for activity" evidence="1">
    <location>
        <position position="99"/>
    </location>
</feature>
<evidence type="ECO:0000255" key="1">
    <source>
        <dbReference type="HAMAP-Rule" id="MF_00087"/>
    </source>
</evidence>
<organism>
    <name type="scientific">Listeria monocytogenes serotype 4a (strain HCC23)</name>
    <dbReference type="NCBI Taxonomy" id="552536"/>
    <lineage>
        <taxon>Bacteria</taxon>
        <taxon>Bacillati</taxon>
        <taxon>Bacillota</taxon>
        <taxon>Bacilli</taxon>
        <taxon>Bacillales</taxon>
        <taxon>Listeriaceae</taxon>
        <taxon>Listeria</taxon>
    </lineage>
</organism>
<keyword id="KW-0521">NADP</keyword>
<keyword id="KW-0560">Oxidoreductase</keyword>
<keyword id="KW-0627">Porphyrin biosynthesis</keyword>
<protein>
    <recommendedName>
        <fullName evidence="1">Glutamyl-tRNA reductase</fullName>
        <shortName evidence="1">GluTR</shortName>
        <ecNumber evidence="1">1.2.1.70</ecNumber>
    </recommendedName>
</protein>